<comment type="function">
    <text evidence="1">Catalyzes the thiamine diphosphate-dependent decarboxylation of 2-oxoglutarate and the subsequent addition of the resulting succinic semialdehyde-thiamine pyrophosphate anion to isochorismate to yield 2-succinyl-5-enolpyruvyl-6-hydroxy-3-cyclohexene-1-carboxylate (SEPHCHC).</text>
</comment>
<comment type="catalytic activity">
    <reaction evidence="1">
        <text>isochorismate + 2-oxoglutarate + H(+) = 5-enolpyruvoyl-6-hydroxy-2-succinyl-cyclohex-3-ene-1-carboxylate + CO2</text>
        <dbReference type="Rhea" id="RHEA:25593"/>
        <dbReference type="ChEBI" id="CHEBI:15378"/>
        <dbReference type="ChEBI" id="CHEBI:16526"/>
        <dbReference type="ChEBI" id="CHEBI:16810"/>
        <dbReference type="ChEBI" id="CHEBI:29780"/>
        <dbReference type="ChEBI" id="CHEBI:58818"/>
        <dbReference type="EC" id="2.2.1.9"/>
    </reaction>
</comment>
<comment type="cofactor">
    <cofactor evidence="1">
        <name>Mg(2+)</name>
        <dbReference type="ChEBI" id="CHEBI:18420"/>
    </cofactor>
    <cofactor evidence="1">
        <name>Mn(2+)</name>
        <dbReference type="ChEBI" id="CHEBI:29035"/>
    </cofactor>
</comment>
<comment type="cofactor">
    <cofactor evidence="1">
        <name>thiamine diphosphate</name>
        <dbReference type="ChEBI" id="CHEBI:58937"/>
    </cofactor>
    <text evidence="1">Binds 1 thiamine pyrophosphate per subunit.</text>
</comment>
<comment type="pathway">
    <text evidence="1">Quinol/quinone metabolism; 1,4-dihydroxy-2-naphthoate biosynthesis; 1,4-dihydroxy-2-naphthoate from chorismate: step 2/7.</text>
</comment>
<comment type="pathway">
    <text evidence="1">Cofactor biosynthesis; phylloquinone biosynthesis.</text>
</comment>
<comment type="subunit">
    <text evidence="1">Homodimer.</text>
</comment>
<comment type="similarity">
    <text evidence="1">Belongs to the TPP enzyme family. MenD subfamily.</text>
</comment>
<sequence>MVDFTNPNTLAASVLVETLFRLGLQQAVICPGSRSSPLTVALARHGGIDCVVSLDERSASFFALGHGKRTGQPVALVCTSGTAAANFLPAIIEAHYSQVPLLVLTGDRPPRLRHCRAGQTIDQTKLYGHYPQWQTELALPEPNMDYCHYLRQTALHSWQKCFWPGLGVVHLNCPFDEPLVPLEHARESLQHLAEEFSKEHFYRGLTTFTTMNRGEAISLPVNFSIFSFPSPQLDFSPLGLILVGVMPGGETPSLLTDILAIARGLGYPVLCDALCSLRNYDDGQTALITNYDFLIRCPRWAEQLVPEQIIQIGELPTSKALRHWLGTIDCPRYILNFHGENLDPLQGQTIYLSASVAQVAEYIHNQGFIPDAEQKNYAHSWLEKQRQSQTIIISALADAHTPLMVAQLAHCLPPQTNLFVANSLPVRWLEFFWPANGDHHRIFVNRGANGIDGTLSTAMGIAHRSRGETVLLTGDLSLLHDSNGFLNQSQMRGNLTIILLNNNGGGIFQTLPIAQCEDVFETYFATPQGVDFGQLCRTYGVEHKIITNLWDLKEQWPSNNSSPIRVLEIIGDRHQEAQWLKSLQAQFCCADSLIQ</sequence>
<evidence type="ECO:0000255" key="1">
    <source>
        <dbReference type="HAMAP-Rule" id="MF_01659"/>
    </source>
</evidence>
<name>MEND_SYNY3</name>
<reference key="1">
    <citation type="journal article" date="1996" name="DNA Res.">
        <title>Sequence analysis of the genome of the unicellular cyanobacterium Synechocystis sp. strain PCC6803. II. Sequence determination of the entire genome and assignment of potential protein-coding regions.</title>
        <authorList>
            <person name="Kaneko T."/>
            <person name="Sato S."/>
            <person name="Kotani H."/>
            <person name="Tanaka A."/>
            <person name="Asamizu E."/>
            <person name="Nakamura Y."/>
            <person name="Miyajima N."/>
            <person name="Hirosawa M."/>
            <person name="Sugiura M."/>
            <person name="Sasamoto S."/>
            <person name="Kimura T."/>
            <person name="Hosouchi T."/>
            <person name="Matsuno A."/>
            <person name="Muraki A."/>
            <person name="Nakazaki N."/>
            <person name="Naruo K."/>
            <person name="Okumura S."/>
            <person name="Shimpo S."/>
            <person name="Takeuchi C."/>
            <person name="Wada T."/>
            <person name="Watanabe A."/>
            <person name="Yamada M."/>
            <person name="Yasuda M."/>
            <person name="Tabata S."/>
        </authorList>
    </citation>
    <scope>NUCLEOTIDE SEQUENCE [LARGE SCALE GENOMIC DNA]</scope>
    <source>
        <strain>ATCC 27184 / PCC 6803 / Kazusa</strain>
    </source>
</reference>
<organism>
    <name type="scientific">Synechocystis sp. (strain ATCC 27184 / PCC 6803 / Kazusa)</name>
    <dbReference type="NCBI Taxonomy" id="1111708"/>
    <lineage>
        <taxon>Bacteria</taxon>
        <taxon>Bacillati</taxon>
        <taxon>Cyanobacteriota</taxon>
        <taxon>Cyanophyceae</taxon>
        <taxon>Synechococcales</taxon>
        <taxon>Merismopediaceae</taxon>
        <taxon>Synechocystis</taxon>
    </lineage>
</organism>
<feature type="chain" id="PRO_0000341878" description="2-succinyl-5-enolpyruvyl-6-hydroxy-3-cyclohexene-1-carboxylate synthase">
    <location>
        <begin position="1"/>
        <end position="595"/>
    </location>
</feature>
<proteinExistence type="inferred from homology"/>
<gene>
    <name evidence="1" type="primary">menD</name>
    <name type="ordered locus">sll0603</name>
</gene>
<dbReference type="EC" id="2.2.1.9" evidence="1"/>
<dbReference type="EMBL" id="BA000022">
    <property type="protein sequence ID" value="BAA10366.1"/>
    <property type="molecule type" value="Genomic_DNA"/>
</dbReference>
<dbReference type="PIR" id="S76520">
    <property type="entry name" value="S76520"/>
</dbReference>
<dbReference type="SMR" id="Q55725"/>
<dbReference type="FunCoup" id="Q55725">
    <property type="interactions" value="105"/>
</dbReference>
<dbReference type="STRING" id="1148.gene:10499867"/>
<dbReference type="PaxDb" id="1148-1001635"/>
<dbReference type="EnsemblBacteria" id="BAA10366">
    <property type="protein sequence ID" value="BAA10366"/>
    <property type="gene ID" value="BAA10366"/>
</dbReference>
<dbReference type="KEGG" id="syn:sll0603"/>
<dbReference type="eggNOG" id="COG1165">
    <property type="taxonomic scope" value="Bacteria"/>
</dbReference>
<dbReference type="InParanoid" id="Q55725"/>
<dbReference type="PhylomeDB" id="Q55725"/>
<dbReference type="BioCyc" id="MetaCyc:MONOMER-13897"/>
<dbReference type="UniPathway" id="UPA00995"/>
<dbReference type="UniPathway" id="UPA01057">
    <property type="reaction ID" value="UER00164"/>
</dbReference>
<dbReference type="Proteomes" id="UP000001425">
    <property type="component" value="Chromosome"/>
</dbReference>
<dbReference type="GO" id="GO:0070204">
    <property type="term" value="F:2-succinyl-5-enolpyruvyl-6-hydroxy-3-cyclohexene-1-carboxylic-acid synthase activity"/>
    <property type="evidence" value="ECO:0007669"/>
    <property type="project" value="UniProtKB-UniRule"/>
</dbReference>
<dbReference type="GO" id="GO:0000287">
    <property type="term" value="F:magnesium ion binding"/>
    <property type="evidence" value="ECO:0007669"/>
    <property type="project" value="UniProtKB-UniRule"/>
</dbReference>
<dbReference type="GO" id="GO:0030145">
    <property type="term" value="F:manganese ion binding"/>
    <property type="evidence" value="ECO:0007669"/>
    <property type="project" value="UniProtKB-UniRule"/>
</dbReference>
<dbReference type="GO" id="GO:0030976">
    <property type="term" value="F:thiamine pyrophosphate binding"/>
    <property type="evidence" value="ECO:0007669"/>
    <property type="project" value="UniProtKB-UniRule"/>
</dbReference>
<dbReference type="GO" id="GO:0009234">
    <property type="term" value="P:menaquinone biosynthetic process"/>
    <property type="evidence" value="ECO:0007669"/>
    <property type="project" value="InterPro"/>
</dbReference>
<dbReference type="GO" id="GO:0042372">
    <property type="term" value="P:phylloquinone biosynthetic process"/>
    <property type="evidence" value="ECO:0007669"/>
    <property type="project" value="UniProtKB-UniRule"/>
</dbReference>
<dbReference type="CDD" id="cd07037">
    <property type="entry name" value="TPP_PYR_MenD"/>
    <property type="match status" value="1"/>
</dbReference>
<dbReference type="CDD" id="cd02009">
    <property type="entry name" value="TPP_SHCHC_synthase"/>
    <property type="match status" value="1"/>
</dbReference>
<dbReference type="Gene3D" id="3.40.50.970">
    <property type="match status" value="2"/>
</dbReference>
<dbReference type="Gene3D" id="3.40.50.1220">
    <property type="entry name" value="TPP-binding domain"/>
    <property type="match status" value="1"/>
</dbReference>
<dbReference type="HAMAP" id="MF_01659">
    <property type="entry name" value="MenD"/>
    <property type="match status" value="1"/>
</dbReference>
<dbReference type="InterPro" id="IPR004433">
    <property type="entry name" value="MenaQ_synth_MenD"/>
</dbReference>
<dbReference type="InterPro" id="IPR032264">
    <property type="entry name" value="MenD_middle"/>
</dbReference>
<dbReference type="InterPro" id="IPR029061">
    <property type="entry name" value="THDP-binding"/>
</dbReference>
<dbReference type="InterPro" id="IPR012001">
    <property type="entry name" value="Thiamin_PyroP_enz_TPP-bd_dom"/>
</dbReference>
<dbReference type="InterPro" id="IPR011766">
    <property type="entry name" value="TPP_enzyme_TPP-bd"/>
</dbReference>
<dbReference type="NCBIfam" id="TIGR00173">
    <property type="entry name" value="menD"/>
    <property type="match status" value="1"/>
</dbReference>
<dbReference type="PANTHER" id="PTHR42916">
    <property type="entry name" value="2-SUCCINYL-5-ENOLPYRUVYL-6-HYDROXY-3-CYCLOHEXENE-1-CARBOXYLATE SYNTHASE"/>
    <property type="match status" value="1"/>
</dbReference>
<dbReference type="PANTHER" id="PTHR42916:SF1">
    <property type="entry name" value="PROTEIN PHYLLO, CHLOROPLASTIC"/>
    <property type="match status" value="1"/>
</dbReference>
<dbReference type="Pfam" id="PF02775">
    <property type="entry name" value="TPP_enzyme_C"/>
    <property type="match status" value="1"/>
</dbReference>
<dbReference type="Pfam" id="PF16582">
    <property type="entry name" value="TPP_enzyme_M_2"/>
    <property type="match status" value="1"/>
</dbReference>
<dbReference type="Pfam" id="PF02776">
    <property type="entry name" value="TPP_enzyme_N"/>
    <property type="match status" value="1"/>
</dbReference>
<dbReference type="PIRSF" id="PIRSF004983">
    <property type="entry name" value="MenD"/>
    <property type="match status" value="1"/>
</dbReference>
<dbReference type="SUPFAM" id="SSF52518">
    <property type="entry name" value="Thiamin diphosphate-binding fold (THDP-binding)"/>
    <property type="match status" value="2"/>
</dbReference>
<protein>
    <recommendedName>
        <fullName evidence="1">2-succinyl-5-enolpyruvyl-6-hydroxy-3-cyclohexene-1-carboxylate synthase</fullName>
        <shortName evidence="1">SEPHCHC synthase</shortName>
        <ecNumber evidence="1">2.2.1.9</ecNumber>
    </recommendedName>
</protein>
<accession>Q55725</accession>
<keyword id="KW-0460">Magnesium</keyword>
<keyword id="KW-0464">Manganese</keyword>
<keyword id="KW-0479">Metal-binding</keyword>
<keyword id="KW-1185">Reference proteome</keyword>
<keyword id="KW-0786">Thiamine pyrophosphate</keyword>
<keyword id="KW-0808">Transferase</keyword>